<sequence>MAKKSMIAKNKRPAKFSTQAYTRCEKCGRPHSVYRKFQLCRVCFRDLAYKGQVPGVTKASW</sequence>
<evidence type="ECO:0000255" key="1">
    <source>
        <dbReference type="HAMAP-Rule" id="MF_01364"/>
    </source>
</evidence>
<evidence type="ECO:0000305" key="2"/>
<protein>
    <recommendedName>
        <fullName evidence="1">Small ribosomal subunit protein uS14B</fullName>
    </recommendedName>
    <alternativeName>
        <fullName evidence="2">30S ribosomal protein S14 type Z</fullName>
    </alternativeName>
</protein>
<name>RS14Z_STRA1</name>
<accession>Q3K3V6</accession>
<keyword id="KW-0479">Metal-binding</keyword>
<keyword id="KW-0687">Ribonucleoprotein</keyword>
<keyword id="KW-0689">Ribosomal protein</keyword>
<keyword id="KW-0694">RNA-binding</keyword>
<keyword id="KW-0699">rRNA-binding</keyword>
<keyword id="KW-0862">Zinc</keyword>
<feature type="chain" id="PRO_0000269141" description="Small ribosomal subunit protein uS14B">
    <location>
        <begin position="1"/>
        <end position="61"/>
    </location>
</feature>
<feature type="binding site" evidence="1">
    <location>
        <position position="24"/>
    </location>
    <ligand>
        <name>Zn(2+)</name>
        <dbReference type="ChEBI" id="CHEBI:29105"/>
    </ligand>
</feature>
<feature type="binding site" evidence="1">
    <location>
        <position position="27"/>
    </location>
    <ligand>
        <name>Zn(2+)</name>
        <dbReference type="ChEBI" id="CHEBI:29105"/>
    </ligand>
</feature>
<feature type="binding site" evidence="1">
    <location>
        <position position="40"/>
    </location>
    <ligand>
        <name>Zn(2+)</name>
        <dbReference type="ChEBI" id="CHEBI:29105"/>
    </ligand>
</feature>
<feature type="binding site" evidence="1">
    <location>
        <position position="43"/>
    </location>
    <ligand>
        <name>Zn(2+)</name>
        <dbReference type="ChEBI" id="CHEBI:29105"/>
    </ligand>
</feature>
<comment type="function">
    <text evidence="1">Binds 16S rRNA, required for the assembly of 30S particles and may also be responsible for determining the conformation of the 16S rRNA at the A site.</text>
</comment>
<comment type="cofactor">
    <cofactor evidence="1">
        <name>Zn(2+)</name>
        <dbReference type="ChEBI" id="CHEBI:29105"/>
    </cofactor>
    <text evidence="1">Binds 1 zinc ion per subunit.</text>
</comment>
<comment type="subunit">
    <text evidence="1">Part of the 30S ribosomal subunit. Contacts proteins S3 and S10.</text>
</comment>
<comment type="similarity">
    <text evidence="1">Belongs to the universal ribosomal protein uS14 family. Zinc-binding uS14 subfamily.</text>
</comment>
<proteinExistence type="inferred from homology"/>
<gene>
    <name evidence="1" type="primary">rpsZ</name>
    <name evidence="1" type="synonym">rpsN1</name>
    <name evidence="1" type="synonym">rpsNA</name>
    <name type="ordered locus">SAK_0104</name>
</gene>
<reference key="1">
    <citation type="journal article" date="2005" name="Proc. Natl. Acad. Sci. U.S.A.">
        <title>Genome analysis of multiple pathogenic isolates of Streptococcus agalactiae: implications for the microbial 'pan-genome'.</title>
        <authorList>
            <person name="Tettelin H."/>
            <person name="Masignani V."/>
            <person name="Cieslewicz M.J."/>
            <person name="Donati C."/>
            <person name="Medini D."/>
            <person name="Ward N.L."/>
            <person name="Angiuoli S.V."/>
            <person name="Crabtree J."/>
            <person name="Jones A.L."/>
            <person name="Durkin A.S."/>
            <person name="DeBoy R.T."/>
            <person name="Davidsen T.M."/>
            <person name="Mora M."/>
            <person name="Scarselli M."/>
            <person name="Margarit y Ros I."/>
            <person name="Peterson J.D."/>
            <person name="Hauser C.R."/>
            <person name="Sundaram J.P."/>
            <person name="Nelson W.C."/>
            <person name="Madupu R."/>
            <person name="Brinkac L.M."/>
            <person name="Dodson R.J."/>
            <person name="Rosovitz M.J."/>
            <person name="Sullivan S.A."/>
            <person name="Daugherty S.C."/>
            <person name="Haft D.H."/>
            <person name="Selengut J."/>
            <person name="Gwinn M.L."/>
            <person name="Zhou L."/>
            <person name="Zafar N."/>
            <person name="Khouri H."/>
            <person name="Radune D."/>
            <person name="Dimitrov G."/>
            <person name="Watkins K."/>
            <person name="O'Connor K.J."/>
            <person name="Smith S."/>
            <person name="Utterback T.R."/>
            <person name="White O."/>
            <person name="Rubens C.E."/>
            <person name="Grandi G."/>
            <person name="Madoff L.C."/>
            <person name="Kasper D.L."/>
            <person name="Telford J.L."/>
            <person name="Wessels M.R."/>
            <person name="Rappuoli R."/>
            <person name="Fraser C.M."/>
        </authorList>
    </citation>
    <scope>NUCLEOTIDE SEQUENCE [LARGE SCALE GENOMIC DNA]</scope>
    <source>
        <strain>ATCC 27591 / A909 / CDC SS700</strain>
    </source>
</reference>
<dbReference type="EMBL" id="CP000114">
    <property type="protein sequence ID" value="ABA45561.1"/>
    <property type="molecule type" value="Genomic_DNA"/>
</dbReference>
<dbReference type="RefSeq" id="WP_001085698.1">
    <property type="nucleotide sequence ID" value="NC_007432.1"/>
</dbReference>
<dbReference type="SMR" id="Q3K3V6"/>
<dbReference type="KEGG" id="sak:SAK_0104"/>
<dbReference type="HOGENOM" id="CLU_139869_3_0_9"/>
<dbReference type="GO" id="GO:0015935">
    <property type="term" value="C:small ribosomal subunit"/>
    <property type="evidence" value="ECO:0007669"/>
    <property type="project" value="TreeGrafter"/>
</dbReference>
<dbReference type="GO" id="GO:0019843">
    <property type="term" value="F:rRNA binding"/>
    <property type="evidence" value="ECO:0007669"/>
    <property type="project" value="UniProtKB-UniRule"/>
</dbReference>
<dbReference type="GO" id="GO:0003735">
    <property type="term" value="F:structural constituent of ribosome"/>
    <property type="evidence" value="ECO:0007669"/>
    <property type="project" value="InterPro"/>
</dbReference>
<dbReference type="GO" id="GO:0008270">
    <property type="term" value="F:zinc ion binding"/>
    <property type="evidence" value="ECO:0007669"/>
    <property type="project" value="UniProtKB-UniRule"/>
</dbReference>
<dbReference type="GO" id="GO:0006412">
    <property type="term" value="P:translation"/>
    <property type="evidence" value="ECO:0007669"/>
    <property type="project" value="UniProtKB-UniRule"/>
</dbReference>
<dbReference type="FunFam" id="4.10.830.10:FF:000001">
    <property type="entry name" value="30S ribosomal protein S14 type Z"/>
    <property type="match status" value="1"/>
</dbReference>
<dbReference type="Gene3D" id="4.10.830.10">
    <property type="entry name" value="30s Ribosomal Protein S14, Chain N"/>
    <property type="match status" value="1"/>
</dbReference>
<dbReference type="HAMAP" id="MF_01364_B">
    <property type="entry name" value="Ribosomal_uS14_2_B"/>
    <property type="match status" value="1"/>
</dbReference>
<dbReference type="InterPro" id="IPR001209">
    <property type="entry name" value="Ribosomal_uS14"/>
</dbReference>
<dbReference type="InterPro" id="IPR023053">
    <property type="entry name" value="Ribosomal_uS14_bact"/>
</dbReference>
<dbReference type="InterPro" id="IPR018271">
    <property type="entry name" value="Ribosomal_uS14_CS"/>
</dbReference>
<dbReference type="InterPro" id="IPR043140">
    <property type="entry name" value="Ribosomal_uS14_sf"/>
</dbReference>
<dbReference type="NCBIfam" id="NF005974">
    <property type="entry name" value="PRK08061.1"/>
    <property type="match status" value="1"/>
</dbReference>
<dbReference type="PANTHER" id="PTHR19836">
    <property type="entry name" value="30S RIBOSOMAL PROTEIN S14"/>
    <property type="match status" value="1"/>
</dbReference>
<dbReference type="PANTHER" id="PTHR19836:SF26">
    <property type="entry name" value="SMALL RIBOSOMAL SUBUNIT PROTEIN US14B"/>
    <property type="match status" value="1"/>
</dbReference>
<dbReference type="Pfam" id="PF00253">
    <property type="entry name" value="Ribosomal_S14"/>
    <property type="match status" value="1"/>
</dbReference>
<dbReference type="SUPFAM" id="SSF57716">
    <property type="entry name" value="Glucocorticoid receptor-like (DNA-binding domain)"/>
    <property type="match status" value="1"/>
</dbReference>
<dbReference type="PROSITE" id="PS00527">
    <property type="entry name" value="RIBOSOMAL_S14"/>
    <property type="match status" value="1"/>
</dbReference>
<organism>
    <name type="scientific">Streptococcus agalactiae serotype Ia (strain ATCC 27591 / A909 / CDC SS700)</name>
    <dbReference type="NCBI Taxonomy" id="205921"/>
    <lineage>
        <taxon>Bacteria</taxon>
        <taxon>Bacillati</taxon>
        <taxon>Bacillota</taxon>
        <taxon>Bacilli</taxon>
        <taxon>Lactobacillales</taxon>
        <taxon>Streptococcaceae</taxon>
        <taxon>Streptococcus</taxon>
    </lineage>
</organism>